<keyword id="KW-0025">Alternative splicing</keyword>
<keyword id="KW-0403">Intermediate filament</keyword>
<keyword id="KW-1267">Proteomics identification</keyword>
<keyword id="KW-1185">Reference proteome</keyword>
<evidence type="ECO:0000255" key="1">
    <source>
        <dbReference type="PROSITE-ProRule" id="PRU01187"/>
    </source>
</evidence>
<evidence type="ECO:0000256" key="2">
    <source>
        <dbReference type="SAM" id="MobiDB-lite"/>
    </source>
</evidence>
<evidence type="ECO:0000269" key="3">
    <source>
    </source>
</evidence>
<evidence type="ECO:0000269" key="4">
    <source>
    </source>
</evidence>
<evidence type="ECO:0000269" key="5">
    <source ref="3"/>
</evidence>
<evidence type="ECO:0000303" key="6">
    <source>
    </source>
</evidence>
<evidence type="ECO:0000303" key="7">
    <source>
    </source>
</evidence>
<evidence type="ECO:0000305" key="8"/>
<reference key="1">
    <citation type="journal article" date="2004" name="Nat. Genet.">
        <title>Complete sequencing and characterization of 21,243 full-length human cDNAs.</title>
        <authorList>
            <person name="Ota T."/>
            <person name="Suzuki Y."/>
            <person name="Nishikawa T."/>
            <person name="Otsuki T."/>
            <person name="Sugiyama T."/>
            <person name="Irie R."/>
            <person name="Wakamatsu A."/>
            <person name="Hayashi K."/>
            <person name="Sato H."/>
            <person name="Nagai K."/>
            <person name="Kimura K."/>
            <person name="Makita H."/>
            <person name="Sekine M."/>
            <person name="Obayashi M."/>
            <person name="Nishi T."/>
            <person name="Shibahara T."/>
            <person name="Tanaka T."/>
            <person name="Ishii S."/>
            <person name="Yamamoto J."/>
            <person name="Saito K."/>
            <person name="Kawai Y."/>
            <person name="Isono Y."/>
            <person name="Nakamura Y."/>
            <person name="Nagahari K."/>
            <person name="Murakami K."/>
            <person name="Yasuda T."/>
            <person name="Iwayanagi T."/>
            <person name="Wagatsuma M."/>
            <person name="Shiratori A."/>
            <person name="Sudo H."/>
            <person name="Hosoiri T."/>
            <person name="Kaku Y."/>
            <person name="Kodaira H."/>
            <person name="Kondo H."/>
            <person name="Sugawara M."/>
            <person name="Takahashi M."/>
            <person name="Kanda K."/>
            <person name="Yokoi T."/>
            <person name="Furuya T."/>
            <person name="Kikkawa E."/>
            <person name="Omura Y."/>
            <person name="Abe K."/>
            <person name="Kamihara K."/>
            <person name="Katsuta N."/>
            <person name="Sato K."/>
            <person name="Tanikawa M."/>
            <person name="Yamazaki M."/>
            <person name="Ninomiya K."/>
            <person name="Ishibashi T."/>
            <person name="Yamashita H."/>
            <person name="Murakawa K."/>
            <person name="Fujimori K."/>
            <person name="Tanai H."/>
            <person name="Kimata M."/>
            <person name="Watanabe M."/>
            <person name="Hiraoka S."/>
            <person name="Chiba Y."/>
            <person name="Ishida S."/>
            <person name="Ono Y."/>
            <person name="Takiguchi S."/>
            <person name="Watanabe S."/>
            <person name="Yosida M."/>
            <person name="Hotuta T."/>
            <person name="Kusano J."/>
            <person name="Kanehori K."/>
            <person name="Takahashi-Fujii A."/>
            <person name="Hara H."/>
            <person name="Tanase T.-O."/>
            <person name="Nomura Y."/>
            <person name="Togiya S."/>
            <person name="Komai F."/>
            <person name="Hara R."/>
            <person name="Takeuchi K."/>
            <person name="Arita M."/>
            <person name="Imose N."/>
            <person name="Musashino K."/>
            <person name="Yuuki H."/>
            <person name="Oshima A."/>
            <person name="Sasaki N."/>
            <person name="Aotsuka S."/>
            <person name="Yoshikawa Y."/>
            <person name="Matsunawa H."/>
            <person name="Ichihara T."/>
            <person name="Shiohata N."/>
            <person name="Sano S."/>
            <person name="Moriya S."/>
            <person name="Momiyama H."/>
            <person name="Satoh N."/>
            <person name="Takami S."/>
            <person name="Terashima Y."/>
            <person name="Suzuki O."/>
            <person name="Nakagawa S."/>
            <person name="Senoh A."/>
            <person name="Mizoguchi H."/>
            <person name="Goto Y."/>
            <person name="Shimizu F."/>
            <person name="Wakebe H."/>
            <person name="Hishigaki H."/>
            <person name="Watanabe T."/>
            <person name="Sugiyama A."/>
            <person name="Takemoto M."/>
            <person name="Kawakami B."/>
            <person name="Yamazaki M."/>
            <person name="Watanabe K."/>
            <person name="Kumagai A."/>
            <person name="Itakura S."/>
            <person name="Fukuzumi Y."/>
            <person name="Fujimori Y."/>
            <person name="Komiyama M."/>
            <person name="Tashiro H."/>
            <person name="Tanigami A."/>
            <person name="Fujiwara T."/>
            <person name="Ono T."/>
            <person name="Yamada K."/>
            <person name="Fujii Y."/>
            <person name="Ozaki K."/>
            <person name="Hirao M."/>
            <person name="Ohmori Y."/>
            <person name="Kawabata A."/>
            <person name="Hikiji T."/>
            <person name="Kobatake N."/>
            <person name="Inagaki H."/>
            <person name="Ikema Y."/>
            <person name="Okamoto S."/>
            <person name="Okitani R."/>
            <person name="Kawakami T."/>
            <person name="Noguchi S."/>
            <person name="Itoh T."/>
            <person name="Shigeta K."/>
            <person name="Senba T."/>
            <person name="Matsumura K."/>
            <person name="Nakajima Y."/>
            <person name="Mizuno T."/>
            <person name="Morinaga M."/>
            <person name="Sasaki M."/>
            <person name="Togashi T."/>
            <person name="Oyama M."/>
            <person name="Hata H."/>
            <person name="Watanabe M."/>
            <person name="Komatsu T."/>
            <person name="Mizushima-Sugano J."/>
            <person name="Satoh T."/>
            <person name="Shirai Y."/>
            <person name="Takahashi Y."/>
            <person name="Nakagawa K."/>
            <person name="Okumura K."/>
            <person name="Nagase T."/>
            <person name="Nomura N."/>
            <person name="Kikuchi H."/>
            <person name="Masuho Y."/>
            <person name="Yamashita R."/>
            <person name="Nakai K."/>
            <person name="Yada T."/>
            <person name="Nakamura Y."/>
            <person name="Ohara O."/>
            <person name="Isogai T."/>
            <person name="Sugano S."/>
        </authorList>
    </citation>
    <scope>NUCLEOTIDE SEQUENCE [LARGE SCALE MRNA] (ISOFORMS 1; 3; 4 AND 5)</scope>
    <scope>VARIANT SER-366</scope>
    <source>
        <tissue>Testis</tissue>
        <tissue>Tongue</tissue>
    </source>
</reference>
<reference key="2">
    <citation type="journal article" date="2006" name="Nature">
        <title>The finished DNA sequence of human chromosome 12.</title>
        <authorList>
            <person name="Scherer S.E."/>
            <person name="Muzny D.M."/>
            <person name="Buhay C.J."/>
            <person name="Chen R."/>
            <person name="Cree A."/>
            <person name="Ding Y."/>
            <person name="Dugan-Rocha S."/>
            <person name="Gill R."/>
            <person name="Gunaratne P."/>
            <person name="Harris R.A."/>
            <person name="Hawes A.C."/>
            <person name="Hernandez J."/>
            <person name="Hodgson A.V."/>
            <person name="Hume J."/>
            <person name="Jackson A."/>
            <person name="Khan Z.M."/>
            <person name="Kovar-Smith C."/>
            <person name="Lewis L.R."/>
            <person name="Lozado R.J."/>
            <person name="Metzker M.L."/>
            <person name="Milosavljevic A."/>
            <person name="Miner G.R."/>
            <person name="Montgomery K.T."/>
            <person name="Morgan M.B."/>
            <person name="Nazareth L.V."/>
            <person name="Scott G."/>
            <person name="Sodergren E."/>
            <person name="Song X.-Z."/>
            <person name="Steffen D."/>
            <person name="Lovering R.C."/>
            <person name="Wheeler D.A."/>
            <person name="Worley K.C."/>
            <person name="Yuan Y."/>
            <person name="Zhang Z."/>
            <person name="Adams C.Q."/>
            <person name="Ansari-Lari M.A."/>
            <person name="Ayele M."/>
            <person name="Brown M.J."/>
            <person name="Chen G."/>
            <person name="Chen Z."/>
            <person name="Clerc-Blankenburg K.P."/>
            <person name="Davis C."/>
            <person name="Delgado O."/>
            <person name="Dinh H.H."/>
            <person name="Draper H."/>
            <person name="Gonzalez-Garay M.L."/>
            <person name="Havlak P."/>
            <person name="Jackson L.R."/>
            <person name="Jacob L.S."/>
            <person name="Kelly S.H."/>
            <person name="Li L."/>
            <person name="Li Z."/>
            <person name="Liu J."/>
            <person name="Liu W."/>
            <person name="Lu J."/>
            <person name="Maheshwari M."/>
            <person name="Nguyen B.-V."/>
            <person name="Okwuonu G.O."/>
            <person name="Pasternak S."/>
            <person name="Perez L.M."/>
            <person name="Plopper F.J.H."/>
            <person name="Santibanez J."/>
            <person name="Shen H."/>
            <person name="Tabor P.E."/>
            <person name="Verduzco D."/>
            <person name="Waldron L."/>
            <person name="Wang Q."/>
            <person name="Williams G.A."/>
            <person name="Zhang J."/>
            <person name="Zhou J."/>
            <person name="Allen C.C."/>
            <person name="Amin A.G."/>
            <person name="Anyalebechi V."/>
            <person name="Bailey M."/>
            <person name="Barbaria J.A."/>
            <person name="Bimage K.E."/>
            <person name="Bryant N.P."/>
            <person name="Burch P.E."/>
            <person name="Burkett C.E."/>
            <person name="Burrell K.L."/>
            <person name="Calderon E."/>
            <person name="Cardenas V."/>
            <person name="Carter K."/>
            <person name="Casias K."/>
            <person name="Cavazos I."/>
            <person name="Cavazos S.R."/>
            <person name="Ceasar H."/>
            <person name="Chacko J."/>
            <person name="Chan S.N."/>
            <person name="Chavez D."/>
            <person name="Christopoulos C."/>
            <person name="Chu J."/>
            <person name="Cockrell R."/>
            <person name="Cox C.D."/>
            <person name="Dang M."/>
            <person name="Dathorne S.R."/>
            <person name="David R."/>
            <person name="Davis C.M."/>
            <person name="Davy-Carroll L."/>
            <person name="Deshazo D.R."/>
            <person name="Donlin J.E."/>
            <person name="D'Souza L."/>
            <person name="Eaves K.A."/>
            <person name="Egan A."/>
            <person name="Emery-Cohen A.J."/>
            <person name="Escotto M."/>
            <person name="Flagg N."/>
            <person name="Forbes L.D."/>
            <person name="Gabisi A.M."/>
            <person name="Garza M."/>
            <person name="Hamilton C."/>
            <person name="Henderson N."/>
            <person name="Hernandez O."/>
            <person name="Hines S."/>
            <person name="Hogues M.E."/>
            <person name="Huang M."/>
            <person name="Idlebird D.G."/>
            <person name="Johnson R."/>
            <person name="Jolivet A."/>
            <person name="Jones S."/>
            <person name="Kagan R."/>
            <person name="King L.M."/>
            <person name="Leal B."/>
            <person name="Lebow H."/>
            <person name="Lee S."/>
            <person name="LeVan J.M."/>
            <person name="Lewis L.C."/>
            <person name="London P."/>
            <person name="Lorensuhewa L.M."/>
            <person name="Loulseged H."/>
            <person name="Lovett D.A."/>
            <person name="Lucier A."/>
            <person name="Lucier R.L."/>
            <person name="Ma J."/>
            <person name="Madu R.C."/>
            <person name="Mapua P."/>
            <person name="Martindale A.D."/>
            <person name="Martinez E."/>
            <person name="Massey E."/>
            <person name="Mawhiney S."/>
            <person name="Meador M.G."/>
            <person name="Mendez S."/>
            <person name="Mercado C."/>
            <person name="Mercado I.C."/>
            <person name="Merritt C.E."/>
            <person name="Miner Z.L."/>
            <person name="Minja E."/>
            <person name="Mitchell T."/>
            <person name="Mohabbat F."/>
            <person name="Mohabbat K."/>
            <person name="Montgomery B."/>
            <person name="Moore N."/>
            <person name="Morris S."/>
            <person name="Munidasa M."/>
            <person name="Ngo R.N."/>
            <person name="Nguyen N.B."/>
            <person name="Nickerson E."/>
            <person name="Nwaokelemeh O.O."/>
            <person name="Nwokenkwo S."/>
            <person name="Obregon M."/>
            <person name="Oguh M."/>
            <person name="Oragunye N."/>
            <person name="Oviedo R.J."/>
            <person name="Parish B.J."/>
            <person name="Parker D.N."/>
            <person name="Parrish J."/>
            <person name="Parks K.L."/>
            <person name="Paul H.A."/>
            <person name="Payton B.A."/>
            <person name="Perez A."/>
            <person name="Perrin W."/>
            <person name="Pickens A."/>
            <person name="Primus E.L."/>
            <person name="Pu L.-L."/>
            <person name="Puazo M."/>
            <person name="Quiles M.M."/>
            <person name="Quiroz J.B."/>
            <person name="Rabata D."/>
            <person name="Reeves K."/>
            <person name="Ruiz S.J."/>
            <person name="Shao H."/>
            <person name="Sisson I."/>
            <person name="Sonaike T."/>
            <person name="Sorelle R.P."/>
            <person name="Sutton A.E."/>
            <person name="Svatek A.F."/>
            <person name="Svetz L.A."/>
            <person name="Tamerisa K.S."/>
            <person name="Taylor T.R."/>
            <person name="Teague B."/>
            <person name="Thomas N."/>
            <person name="Thorn R.D."/>
            <person name="Trejos Z.Y."/>
            <person name="Trevino B.K."/>
            <person name="Ukegbu O.N."/>
            <person name="Urban J.B."/>
            <person name="Vasquez L.I."/>
            <person name="Vera V.A."/>
            <person name="Villasana D.M."/>
            <person name="Wang L."/>
            <person name="Ward-Moore S."/>
            <person name="Warren J.T."/>
            <person name="Wei X."/>
            <person name="White F."/>
            <person name="Williamson A.L."/>
            <person name="Wleczyk R."/>
            <person name="Wooden H.S."/>
            <person name="Wooden S.H."/>
            <person name="Yen J."/>
            <person name="Yoon L."/>
            <person name="Yoon V."/>
            <person name="Zorrilla S.E."/>
            <person name="Nelson D."/>
            <person name="Kucherlapati R."/>
            <person name="Weinstock G."/>
            <person name="Gibbs R.A."/>
        </authorList>
    </citation>
    <scope>NUCLEOTIDE SEQUENCE [LARGE SCALE GENOMIC DNA]</scope>
</reference>
<reference key="3">
    <citation type="submission" date="2005-07" db="EMBL/GenBank/DDBJ databases">
        <authorList>
            <person name="Mural R.J."/>
            <person name="Istrail S."/>
            <person name="Sutton G.G."/>
            <person name="Florea L."/>
            <person name="Halpern A.L."/>
            <person name="Mobarry C.M."/>
            <person name="Lippert R."/>
            <person name="Walenz B."/>
            <person name="Shatkay H."/>
            <person name="Dew I."/>
            <person name="Miller J.R."/>
            <person name="Flanigan M.J."/>
            <person name="Edwards N.J."/>
            <person name="Bolanos R."/>
            <person name="Fasulo D."/>
            <person name="Halldorsson B.V."/>
            <person name="Hannenhalli S."/>
            <person name="Turner R."/>
            <person name="Yooseph S."/>
            <person name="Lu F."/>
            <person name="Nusskern D.R."/>
            <person name="Shue B.C."/>
            <person name="Zheng X.H."/>
            <person name="Zhong F."/>
            <person name="Delcher A.L."/>
            <person name="Huson D.H."/>
            <person name="Kravitz S.A."/>
            <person name="Mouchard L."/>
            <person name="Reinert K."/>
            <person name="Remington K.A."/>
            <person name="Clark A.G."/>
            <person name="Waterman M.S."/>
            <person name="Eichler E.E."/>
            <person name="Adams M.D."/>
            <person name="Hunkapiller M.W."/>
            <person name="Myers E.W."/>
            <person name="Venter J.C."/>
        </authorList>
    </citation>
    <scope>NUCLEOTIDE SEQUENCE [LARGE SCALE GENOMIC DNA]</scope>
    <scope>VARIANT SER-366</scope>
</reference>
<reference key="4">
    <citation type="journal article" date="2004" name="Genome Res.">
        <title>The status, quality, and expansion of the NIH full-length cDNA project: the Mammalian Gene Collection (MGC).</title>
        <authorList>
            <consortium name="The MGC Project Team"/>
        </authorList>
    </citation>
    <scope>NUCLEOTIDE SEQUENCE [LARGE SCALE MRNA] (ISOFORM 2)</scope>
    <scope>VARIANT SER-366</scope>
    <source>
        <tissue>Brain</tissue>
    </source>
</reference>
<feature type="chain" id="PRO_0000317247" description="Lamin tail domain-containing protein 1">
    <location>
        <begin position="1"/>
        <end position="388"/>
    </location>
</feature>
<feature type="domain" description="LTD" evidence="1">
    <location>
        <begin position="136"/>
        <end position="254"/>
    </location>
</feature>
<feature type="region of interest" description="Disordered" evidence="2">
    <location>
        <begin position="349"/>
        <end position="388"/>
    </location>
</feature>
<feature type="compositionally biased region" description="Basic residues" evidence="2">
    <location>
        <begin position="365"/>
        <end position="381"/>
    </location>
</feature>
<feature type="splice variant" id="VSP_030922" description="In isoform 2." evidence="7">
    <location>
        <begin position="1"/>
        <end position="97"/>
    </location>
</feature>
<feature type="splice variant" id="VSP_040489" description="In isoform 3." evidence="6">
    <location>
        <begin position="1"/>
        <end position="63"/>
    </location>
</feature>
<feature type="splice variant" id="VSP_040490" description="In isoform 4 and isoform 5." evidence="6">
    <original>MLEGSWINR</original>
    <variation>MKDTQDIQEASKAMQNKVHEQEDKNEKQKQ</variation>
    <location>
        <begin position="1"/>
        <end position="9"/>
    </location>
</feature>
<feature type="splice variant" id="VSP_040491" description="In isoform 3." evidence="6">
    <original>GQLTSKATVGSCSRVENSLD</original>
    <variation>MQQPVRAGDIGVSRVQTHHN</variation>
    <location>
        <begin position="64"/>
        <end position="83"/>
    </location>
</feature>
<feature type="splice variant" id="VSP_040492" description="In isoform 4." evidence="6">
    <location>
        <begin position="206"/>
        <end position="245"/>
    </location>
</feature>
<feature type="sequence variant" id="VAR_049809" description="In dbSNP:rs35450203.">
    <original>A</original>
    <variation>T</variation>
    <location>
        <position position="264"/>
    </location>
</feature>
<feature type="sequence variant" id="VAR_049810" description="In dbSNP:rs34326830.">
    <original>E</original>
    <variation>G</variation>
    <location>
        <position position="267"/>
    </location>
</feature>
<feature type="sequence variant" id="VAR_049811" description="In dbSNP:rs34732786.">
    <original>T</original>
    <variation>A</variation>
    <location>
        <position position="289"/>
    </location>
</feature>
<feature type="sequence variant" id="VAR_049812" description="In dbSNP:rs34074522.">
    <original>A</original>
    <variation>T</variation>
    <location>
        <position position="290"/>
    </location>
</feature>
<feature type="sequence variant" id="VAR_049813" description="In dbSNP:rs1479500." evidence="3 4 5">
    <original>T</original>
    <variation>S</variation>
    <location>
        <position position="366"/>
    </location>
</feature>
<feature type="sequence conflict" description="In Ref. 1; BAC04132." evidence="8" ref="1">
    <original>R</original>
    <variation>K</variation>
    <location>
        <position position="10"/>
    </location>
</feature>
<feature type="sequence conflict" description="In Ref. 1; BAG59389." evidence="8" ref="1">
    <original>K</original>
    <variation>E</variation>
    <location>
        <position position="381"/>
    </location>
</feature>
<organism>
    <name type="scientific">Homo sapiens</name>
    <name type="common">Human</name>
    <dbReference type="NCBI Taxonomy" id="9606"/>
    <lineage>
        <taxon>Eukaryota</taxon>
        <taxon>Metazoa</taxon>
        <taxon>Chordata</taxon>
        <taxon>Craniata</taxon>
        <taxon>Vertebrata</taxon>
        <taxon>Euteleostomi</taxon>
        <taxon>Mammalia</taxon>
        <taxon>Eutheria</taxon>
        <taxon>Euarchontoglires</taxon>
        <taxon>Primates</taxon>
        <taxon>Haplorrhini</taxon>
        <taxon>Catarrhini</taxon>
        <taxon>Hominidae</taxon>
        <taxon>Homo</taxon>
    </lineage>
</organism>
<comment type="alternative products">
    <event type="alternative splicing"/>
    <isoform>
        <id>Q8N9Z9-1</id>
        <name>1</name>
        <sequence type="displayed"/>
    </isoform>
    <isoform>
        <id>Q8N9Z9-2</id>
        <name>2</name>
        <sequence type="described" ref="VSP_030922"/>
    </isoform>
    <isoform>
        <id>Q8N9Z9-3</id>
        <name>3</name>
        <sequence type="described" ref="VSP_040489 VSP_040491"/>
    </isoform>
    <isoform>
        <id>Q8N9Z9-4</id>
        <name>4</name>
        <sequence type="described" ref="VSP_040490 VSP_040492"/>
    </isoform>
    <isoform>
        <id>Q8N9Z9-5</id>
        <name>5</name>
        <sequence type="described" ref="VSP_040490"/>
    </isoform>
</comment>
<comment type="similarity">
    <text evidence="8">Belongs to the intermediate filament family.</text>
</comment>
<name>LMTD1_HUMAN</name>
<sequence length="388" mass="43408">MLEGSWINRREDKLGVYSLVHFSPKMLGSVATTLPLSSSNSSGMPLGYYLSSPQISRVTISTTGQLTSKATVGSCSRVENSLDASPFSVPKKQDESPMIGDGEDYFLSLFGDSKKLTAHSNYTQKTLKYFSMILEEVGQFTSSSLGDVEIAEVNVKGLFVKLINSSLDKEMAIGDHILQQNVNGQTISLYRFLPNIVMQANSTVTVWAAASEAKHQPPSDFLWKEQDKFRASPDCITILCKPNGQAIAWYTPIHWKQAWEKLDADVEFNRCSVVSPTFRKRVFQWTASTATITKEKQDQPKKDISNYQVEQAQVLLKREKEIPPTVFPNRSPWCQNPYVSAHPYCPLIEPHNTSTAGGRLDRQPRTRSTRPNRASGSKKKKTSESQKQ</sequence>
<dbReference type="EMBL" id="AK093323">
    <property type="protein sequence ID" value="BAC04132.1"/>
    <property type="molecule type" value="mRNA"/>
</dbReference>
<dbReference type="EMBL" id="AK296816">
    <property type="protein sequence ID" value="BAG59389.1"/>
    <property type="molecule type" value="mRNA"/>
</dbReference>
<dbReference type="EMBL" id="AK302292">
    <property type="protein sequence ID" value="BAG63632.1"/>
    <property type="molecule type" value="mRNA"/>
</dbReference>
<dbReference type="EMBL" id="AK310411">
    <property type="status" value="NOT_ANNOTATED_CDS"/>
    <property type="molecule type" value="mRNA"/>
</dbReference>
<dbReference type="EMBL" id="AC022367">
    <property type="status" value="NOT_ANNOTATED_CDS"/>
    <property type="molecule type" value="Genomic_DNA"/>
</dbReference>
<dbReference type="EMBL" id="CH471094">
    <property type="protein sequence ID" value="EAW96516.1"/>
    <property type="molecule type" value="Genomic_DNA"/>
</dbReference>
<dbReference type="EMBL" id="BC037957">
    <property type="protein sequence ID" value="AAH37957.1"/>
    <property type="molecule type" value="mRNA"/>
</dbReference>
<dbReference type="CCDS" id="CCDS44847.1">
    <molecule id="Q8N9Z9-3"/>
</dbReference>
<dbReference type="CCDS" id="CCDS44848.1">
    <molecule id="Q8N9Z9-4"/>
</dbReference>
<dbReference type="CCDS" id="CCDS44849.1">
    <molecule id="Q8N9Z9-5"/>
</dbReference>
<dbReference type="CCDS" id="CCDS58218.1">
    <molecule id="Q8N9Z9-2"/>
</dbReference>
<dbReference type="CCDS" id="CCDS8704.1">
    <molecule id="Q8N9Z9-1"/>
</dbReference>
<dbReference type="RefSeq" id="NP_001139199.1">
    <molecule id="Q8N9Z9-3"/>
    <property type="nucleotide sequence ID" value="NM_001145727.3"/>
</dbReference>
<dbReference type="RefSeq" id="NP_001139200.1">
    <molecule id="Q8N9Z9-5"/>
    <property type="nucleotide sequence ID" value="NM_001145728.2"/>
</dbReference>
<dbReference type="RefSeq" id="NP_001139201.1">
    <molecule id="Q8N9Z9-4"/>
    <property type="nucleotide sequence ID" value="NM_001145729.1"/>
</dbReference>
<dbReference type="RefSeq" id="NP_001243195.1">
    <molecule id="Q8N9Z9-2"/>
    <property type="nucleotide sequence ID" value="NM_001256266.1"/>
</dbReference>
<dbReference type="RefSeq" id="NP_689803.2">
    <molecule id="Q8N9Z9-1"/>
    <property type="nucleotide sequence ID" value="NM_152590.3"/>
</dbReference>
<dbReference type="RefSeq" id="XP_011518877.1">
    <molecule id="Q8N9Z9-5"/>
    <property type="nucleotide sequence ID" value="XM_011520575.2"/>
</dbReference>
<dbReference type="RefSeq" id="XP_011518878.1">
    <molecule id="Q8N9Z9-5"/>
    <property type="nucleotide sequence ID" value="XM_011520576.3"/>
</dbReference>
<dbReference type="RefSeq" id="XP_011518879.1">
    <molecule id="Q8N9Z9-5"/>
    <property type="nucleotide sequence ID" value="XM_011520577.3"/>
</dbReference>
<dbReference type="RefSeq" id="XP_011518880.1">
    <molecule id="Q8N9Z9-5"/>
    <property type="nucleotide sequence ID" value="XM_011520578.3"/>
</dbReference>
<dbReference type="RefSeq" id="XP_011518882.1">
    <property type="nucleotide sequence ID" value="XM_011520580.1"/>
</dbReference>
<dbReference type="RefSeq" id="XP_016874380.1">
    <molecule id="Q8N9Z9-5"/>
    <property type="nucleotide sequence ID" value="XM_017018891.2"/>
</dbReference>
<dbReference type="RefSeq" id="XP_047284365.1">
    <molecule id="Q8N9Z9-5"/>
    <property type="nucleotide sequence ID" value="XM_047428409.1"/>
</dbReference>
<dbReference type="RefSeq" id="XP_047284366.1">
    <molecule id="Q8N9Z9-5"/>
    <property type="nucleotide sequence ID" value="XM_047428410.1"/>
</dbReference>
<dbReference type="RefSeq" id="XP_047284367.1">
    <molecule id="Q8N9Z9-5"/>
    <property type="nucleotide sequence ID" value="XM_047428411.1"/>
</dbReference>
<dbReference type="SMR" id="Q8N9Z9"/>
<dbReference type="BioGRID" id="127760">
    <property type="interactions" value="3"/>
</dbReference>
<dbReference type="FunCoup" id="Q8N9Z9">
    <property type="interactions" value="53"/>
</dbReference>
<dbReference type="IntAct" id="Q8N9Z9">
    <property type="interactions" value="2"/>
</dbReference>
<dbReference type="STRING" id="9606.ENSP00000407353"/>
<dbReference type="GlyGen" id="Q8N9Z9">
    <property type="glycosylation" value="1 site, 1 O-linked glycan (1 site)"/>
</dbReference>
<dbReference type="iPTMnet" id="Q8N9Z9"/>
<dbReference type="PhosphoSitePlus" id="Q8N9Z9"/>
<dbReference type="BioMuta" id="LMNTD1"/>
<dbReference type="DMDM" id="296434538"/>
<dbReference type="jPOST" id="Q8N9Z9"/>
<dbReference type="MassIVE" id="Q8N9Z9"/>
<dbReference type="PaxDb" id="9606-ENSP00000407353"/>
<dbReference type="PeptideAtlas" id="Q8N9Z9"/>
<dbReference type="ProteomicsDB" id="72615">
    <molecule id="Q8N9Z9-1"/>
</dbReference>
<dbReference type="ProteomicsDB" id="72616">
    <molecule id="Q8N9Z9-2"/>
</dbReference>
<dbReference type="ProteomicsDB" id="72617">
    <molecule id="Q8N9Z9-3"/>
</dbReference>
<dbReference type="ProteomicsDB" id="72618">
    <molecule id="Q8N9Z9-4"/>
</dbReference>
<dbReference type="ProteomicsDB" id="72619">
    <molecule id="Q8N9Z9-5"/>
</dbReference>
<dbReference type="Antibodypedia" id="42350">
    <property type="antibodies" value="107 antibodies from 21 providers"/>
</dbReference>
<dbReference type="DNASU" id="160492"/>
<dbReference type="Ensembl" id="ENST00000282881.10">
    <molecule id="Q8N9Z9-1"/>
    <property type="protein sequence ID" value="ENSP00000282881.6"/>
    <property type="gene ID" value="ENSG00000152936.11"/>
</dbReference>
<dbReference type="Ensembl" id="ENST00000413632.6">
    <molecule id="Q8N9Z9-4"/>
    <property type="protein sequence ID" value="ENSP00000393150.2"/>
    <property type="gene ID" value="ENSG00000152936.11"/>
</dbReference>
<dbReference type="Ensembl" id="ENST00000445693.5">
    <molecule id="Q8N9Z9-3"/>
    <property type="protein sequence ID" value="ENSP00000407043.1"/>
    <property type="gene ID" value="ENSG00000152936.11"/>
</dbReference>
<dbReference type="Ensembl" id="ENST00000458174.7">
    <molecule id="Q8N9Z9-5"/>
    <property type="protein sequence ID" value="ENSP00000407353.2"/>
    <property type="gene ID" value="ENSG00000152936.11"/>
</dbReference>
<dbReference type="Ensembl" id="ENST00000539744.5">
    <molecule id="Q8N9Z9-2"/>
    <property type="protein sequence ID" value="ENSP00000443132.1"/>
    <property type="gene ID" value="ENSG00000152936.11"/>
</dbReference>
<dbReference type="GeneID" id="160492"/>
<dbReference type="KEGG" id="hsa:160492"/>
<dbReference type="MANE-Select" id="ENST00000458174.7">
    <molecule id="Q8N9Z9-5"/>
    <property type="protein sequence ID" value="ENSP00000407353.2"/>
    <property type="RefSeq nucleotide sequence ID" value="NM_001145728.2"/>
    <property type="RefSeq protein sequence ID" value="NP_001139200.1"/>
</dbReference>
<dbReference type="UCSC" id="uc001rgs.3">
    <molecule id="Q8N9Z9-1"/>
    <property type="organism name" value="human"/>
</dbReference>
<dbReference type="AGR" id="HGNC:26683"/>
<dbReference type="CTD" id="160492"/>
<dbReference type="DisGeNET" id="160492"/>
<dbReference type="GeneCards" id="LMNTD1"/>
<dbReference type="HGNC" id="HGNC:26683">
    <property type="gene designation" value="LMNTD1"/>
</dbReference>
<dbReference type="HPA" id="ENSG00000152936">
    <property type="expression patterns" value="Group enriched (fallopian tube, testis)"/>
</dbReference>
<dbReference type="neXtProt" id="NX_Q8N9Z9"/>
<dbReference type="OpenTargets" id="ENSG00000152936"/>
<dbReference type="PharmGKB" id="PA162391895"/>
<dbReference type="VEuPathDB" id="HostDB:ENSG00000152936"/>
<dbReference type="eggNOG" id="KOG0977">
    <property type="taxonomic scope" value="Eukaryota"/>
</dbReference>
<dbReference type="GeneTree" id="ENSGT00910000144343"/>
<dbReference type="HOGENOM" id="CLU_048894_1_0_1"/>
<dbReference type="InParanoid" id="Q8N9Z9"/>
<dbReference type="OMA" id="PTSRRHM"/>
<dbReference type="OrthoDB" id="102442at2759"/>
<dbReference type="PAN-GO" id="Q8N9Z9">
    <property type="GO annotations" value="2 GO annotations based on evolutionary models"/>
</dbReference>
<dbReference type="PhylomeDB" id="Q8N9Z9"/>
<dbReference type="TreeFam" id="TF338357"/>
<dbReference type="PathwayCommons" id="Q8N9Z9"/>
<dbReference type="SignaLink" id="Q8N9Z9"/>
<dbReference type="BioGRID-ORCS" id="160492">
    <property type="hits" value="13 hits in 1137 CRISPR screens"/>
</dbReference>
<dbReference type="ChiTaRS" id="LMNTD1">
    <property type="organism name" value="human"/>
</dbReference>
<dbReference type="GenomeRNAi" id="160492"/>
<dbReference type="Pharos" id="Q8N9Z9">
    <property type="development level" value="Tdark"/>
</dbReference>
<dbReference type="PRO" id="PR:Q8N9Z9"/>
<dbReference type="Proteomes" id="UP000005640">
    <property type="component" value="Chromosome 12"/>
</dbReference>
<dbReference type="RNAct" id="Q8N9Z9">
    <property type="molecule type" value="protein"/>
</dbReference>
<dbReference type="Bgee" id="ENSG00000152936">
    <property type="expression patterns" value="Expressed in right uterine tube and 95 other cell types or tissues"/>
</dbReference>
<dbReference type="ExpressionAtlas" id="Q8N9Z9">
    <property type="expression patterns" value="baseline and differential"/>
</dbReference>
<dbReference type="GO" id="GO:0005737">
    <property type="term" value="C:cytoplasm"/>
    <property type="evidence" value="ECO:0000318"/>
    <property type="project" value="GO_Central"/>
</dbReference>
<dbReference type="GO" id="GO:0005882">
    <property type="term" value="C:intermediate filament"/>
    <property type="evidence" value="ECO:0007669"/>
    <property type="project" value="UniProtKB-KW"/>
</dbReference>
<dbReference type="GO" id="GO:0005635">
    <property type="term" value="C:nuclear envelope"/>
    <property type="evidence" value="ECO:0000318"/>
    <property type="project" value="GO_Central"/>
</dbReference>
<dbReference type="GO" id="GO:0008283">
    <property type="term" value="P:cell population proliferation"/>
    <property type="evidence" value="ECO:0007669"/>
    <property type="project" value="Ensembl"/>
</dbReference>
<dbReference type="Gene3D" id="2.60.40.1260">
    <property type="entry name" value="Lamin Tail domain"/>
    <property type="match status" value="1"/>
</dbReference>
<dbReference type="InterPro" id="IPR001322">
    <property type="entry name" value="Lamin_tail_dom"/>
</dbReference>
<dbReference type="InterPro" id="IPR036415">
    <property type="entry name" value="Lamin_tail_dom_sf"/>
</dbReference>
<dbReference type="InterPro" id="IPR042840">
    <property type="entry name" value="LMNTD1"/>
</dbReference>
<dbReference type="PANTHER" id="PTHR47012">
    <property type="entry name" value="LAMIN TAIL DOMAIN-CONTAINING PROTEIN 1"/>
    <property type="match status" value="1"/>
</dbReference>
<dbReference type="PANTHER" id="PTHR47012:SF1">
    <property type="entry name" value="LAMIN TAIL DOMAIN-CONTAINING PROTEIN 1"/>
    <property type="match status" value="1"/>
</dbReference>
<dbReference type="Pfam" id="PF00932">
    <property type="entry name" value="LTD"/>
    <property type="match status" value="1"/>
</dbReference>
<dbReference type="SUPFAM" id="SSF74853">
    <property type="entry name" value="Lamin A/C globular tail domain"/>
    <property type="match status" value="1"/>
</dbReference>
<dbReference type="PROSITE" id="PS51841">
    <property type="entry name" value="LTD"/>
    <property type="match status" value="1"/>
</dbReference>
<protein>
    <recommendedName>
        <fullName>Lamin tail domain-containing protein 1</fullName>
    </recommendedName>
    <alternativeName>
        <fullName>Intermediate filament tail domain-containing protein 1</fullName>
    </alternativeName>
</protein>
<accession>Q8N9Z9</accession>
<accession>B4DL27</accession>
<accession>B4DY70</accession>
<accession>Q8IY38</accession>
<gene>
    <name type="primary">LMNTD1</name>
    <name type="synonym">IFLTD1</name>
</gene>
<proteinExistence type="evidence at protein level"/>